<accession>O66474</accession>
<proteinExistence type="evidence at protein level"/>
<name>RS6_AQUAE</name>
<evidence type="ECO:0000250" key="1"/>
<evidence type="ECO:0000305" key="2"/>
<evidence type="ECO:0007829" key="3">
    <source>
        <dbReference type="PDB" id="2J5A"/>
    </source>
</evidence>
<feature type="chain" id="PRO_0000176716" description="Small ribosomal subunit protein bS6">
    <location>
        <begin position="1"/>
        <end position="110"/>
    </location>
</feature>
<feature type="strand" evidence="3">
    <location>
        <begin position="8"/>
        <end position="16"/>
    </location>
</feature>
<feature type="helix" evidence="3">
    <location>
        <begin position="22"/>
        <end position="38"/>
    </location>
</feature>
<feature type="strand" evidence="3">
    <location>
        <begin position="41"/>
        <end position="53"/>
    </location>
</feature>
<feature type="strand" evidence="3">
    <location>
        <begin position="58"/>
        <end position="60"/>
    </location>
</feature>
<feature type="strand" evidence="3">
    <location>
        <begin position="62"/>
        <end position="74"/>
    </location>
</feature>
<feature type="helix" evidence="3">
    <location>
        <begin position="78"/>
        <end position="88"/>
    </location>
</feature>
<feature type="strand" evidence="3">
    <location>
        <begin position="92"/>
        <end position="100"/>
    </location>
</feature>
<feature type="helix" evidence="3">
    <location>
        <begin position="102"/>
        <end position="104"/>
    </location>
</feature>
<gene>
    <name type="primary">rpsF</name>
    <name type="ordered locus">aq_063</name>
</gene>
<keyword id="KW-0002">3D-structure</keyword>
<keyword id="KW-1185">Reference proteome</keyword>
<keyword id="KW-0687">Ribonucleoprotein</keyword>
<keyword id="KW-0689">Ribosomal protein</keyword>
<keyword id="KW-0694">RNA-binding</keyword>
<keyword id="KW-0699">rRNA-binding</keyword>
<protein>
    <recommendedName>
        <fullName evidence="2">Small ribosomal subunit protein bS6</fullName>
    </recommendedName>
    <alternativeName>
        <fullName>30S ribosomal protein S6</fullName>
    </alternativeName>
</protein>
<sequence length="110" mass="13473">MRHYKTLRYYETVFAVKPTLSEEEMKKKFEQVKEFIKQKGGEILYEEDWGMRQLAYPIQKFNNARYFLVQFKTENPQLPNELDFQLKIDEDVIRWLNFQIKESEVKKNAQ</sequence>
<comment type="function">
    <text evidence="1">Binds together with bS18 to 16S ribosomal RNA.</text>
</comment>
<comment type="similarity">
    <text evidence="2">Belongs to the bacterial ribosomal protein bS6 family.</text>
</comment>
<reference key="1">
    <citation type="journal article" date="1998" name="Nature">
        <title>The complete genome of the hyperthermophilic bacterium Aquifex aeolicus.</title>
        <authorList>
            <person name="Deckert G."/>
            <person name="Warren P.V."/>
            <person name="Gaasterland T."/>
            <person name="Young W.G."/>
            <person name="Lenox A.L."/>
            <person name="Graham D.E."/>
            <person name="Overbeek R."/>
            <person name="Snead M.A."/>
            <person name="Keller M."/>
            <person name="Aujay M."/>
            <person name="Huber R."/>
            <person name="Feldman R.A."/>
            <person name="Short J.M."/>
            <person name="Olsen G.J."/>
            <person name="Swanson R.V."/>
        </authorList>
    </citation>
    <scope>NUCLEOTIDE SEQUENCE [LARGE SCALE GENOMIC DNA]</scope>
    <source>
        <strain>VF5</strain>
    </source>
</reference>
<dbReference type="EMBL" id="AE000657">
    <property type="protein sequence ID" value="AAC06443.1"/>
    <property type="molecule type" value="Genomic_DNA"/>
</dbReference>
<dbReference type="PIR" id="G70305">
    <property type="entry name" value="G70305"/>
</dbReference>
<dbReference type="RefSeq" id="NP_213034.1">
    <property type="nucleotide sequence ID" value="NC_000918.1"/>
</dbReference>
<dbReference type="PDB" id="2J5A">
    <property type="method" value="X-ray"/>
    <property type="resolution" value="2.30 A"/>
    <property type="chains" value="A=1-110"/>
</dbReference>
<dbReference type="PDBsum" id="2J5A"/>
<dbReference type="SMR" id="O66474"/>
<dbReference type="FunCoup" id="O66474">
    <property type="interactions" value="442"/>
</dbReference>
<dbReference type="STRING" id="224324.aq_063"/>
<dbReference type="EnsemblBacteria" id="AAC06443">
    <property type="protein sequence ID" value="AAC06443"/>
    <property type="gene ID" value="aq_063"/>
</dbReference>
<dbReference type="KEGG" id="aae:aq_063"/>
<dbReference type="PATRIC" id="fig|224324.8.peg.51"/>
<dbReference type="eggNOG" id="COG0360">
    <property type="taxonomic scope" value="Bacteria"/>
</dbReference>
<dbReference type="HOGENOM" id="CLU_113441_5_2_0"/>
<dbReference type="InParanoid" id="O66474"/>
<dbReference type="OrthoDB" id="9812702at2"/>
<dbReference type="EvolutionaryTrace" id="O66474"/>
<dbReference type="Proteomes" id="UP000000798">
    <property type="component" value="Chromosome"/>
</dbReference>
<dbReference type="GO" id="GO:0005737">
    <property type="term" value="C:cytoplasm"/>
    <property type="evidence" value="ECO:0007669"/>
    <property type="project" value="UniProtKB-ARBA"/>
</dbReference>
<dbReference type="GO" id="GO:1990904">
    <property type="term" value="C:ribonucleoprotein complex"/>
    <property type="evidence" value="ECO:0007669"/>
    <property type="project" value="UniProtKB-KW"/>
</dbReference>
<dbReference type="GO" id="GO:0005840">
    <property type="term" value="C:ribosome"/>
    <property type="evidence" value="ECO:0007669"/>
    <property type="project" value="UniProtKB-KW"/>
</dbReference>
<dbReference type="GO" id="GO:0070181">
    <property type="term" value="F:small ribosomal subunit rRNA binding"/>
    <property type="evidence" value="ECO:0000318"/>
    <property type="project" value="GO_Central"/>
</dbReference>
<dbReference type="GO" id="GO:0003735">
    <property type="term" value="F:structural constituent of ribosome"/>
    <property type="evidence" value="ECO:0000318"/>
    <property type="project" value="GO_Central"/>
</dbReference>
<dbReference type="GO" id="GO:0006412">
    <property type="term" value="P:translation"/>
    <property type="evidence" value="ECO:0007669"/>
    <property type="project" value="UniProtKB-UniRule"/>
</dbReference>
<dbReference type="CDD" id="cd00473">
    <property type="entry name" value="bS6"/>
    <property type="match status" value="1"/>
</dbReference>
<dbReference type="FunFam" id="3.30.70.60:FF:000002">
    <property type="entry name" value="30S ribosomal protein S6"/>
    <property type="match status" value="1"/>
</dbReference>
<dbReference type="Gene3D" id="3.30.70.60">
    <property type="match status" value="1"/>
</dbReference>
<dbReference type="HAMAP" id="MF_00360">
    <property type="entry name" value="Ribosomal_bS6"/>
    <property type="match status" value="1"/>
</dbReference>
<dbReference type="InterPro" id="IPR000529">
    <property type="entry name" value="Ribosomal_bS6"/>
</dbReference>
<dbReference type="InterPro" id="IPR035980">
    <property type="entry name" value="Ribosomal_bS6_sf"/>
</dbReference>
<dbReference type="InterPro" id="IPR020814">
    <property type="entry name" value="Ribosomal_S6_plastid/chlpt"/>
</dbReference>
<dbReference type="InterPro" id="IPR014717">
    <property type="entry name" value="Transl_elong_EF1B/ribsomal_bS6"/>
</dbReference>
<dbReference type="NCBIfam" id="TIGR00166">
    <property type="entry name" value="S6"/>
    <property type="match status" value="1"/>
</dbReference>
<dbReference type="PANTHER" id="PTHR21011">
    <property type="entry name" value="MITOCHONDRIAL 28S RIBOSOMAL PROTEIN S6"/>
    <property type="match status" value="1"/>
</dbReference>
<dbReference type="PANTHER" id="PTHR21011:SF1">
    <property type="entry name" value="SMALL RIBOSOMAL SUBUNIT PROTEIN BS6M"/>
    <property type="match status" value="1"/>
</dbReference>
<dbReference type="Pfam" id="PF01250">
    <property type="entry name" value="Ribosomal_S6"/>
    <property type="match status" value="1"/>
</dbReference>
<dbReference type="SUPFAM" id="SSF54995">
    <property type="entry name" value="Ribosomal protein S6"/>
    <property type="match status" value="1"/>
</dbReference>
<organism>
    <name type="scientific">Aquifex aeolicus (strain VF5)</name>
    <dbReference type="NCBI Taxonomy" id="224324"/>
    <lineage>
        <taxon>Bacteria</taxon>
        <taxon>Pseudomonadati</taxon>
        <taxon>Aquificota</taxon>
        <taxon>Aquificia</taxon>
        <taxon>Aquificales</taxon>
        <taxon>Aquificaceae</taxon>
        <taxon>Aquifex</taxon>
    </lineage>
</organism>